<protein>
    <recommendedName>
        <fullName evidence="1">Elongation factor P</fullName>
        <shortName evidence="1">EF-P</shortName>
    </recommendedName>
</protein>
<gene>
    <name evidence="1" type="primary">efp</name>
    <name type="ordered locus">SNSL254_A4695</name>
</gene>
<dbReference type="EMBL" id="CP001113">
    <property type="protein sequence ID" value="ACF64160.1"/>
    <property type="molecule type" value="Genomic_DNA"/>
</dbReference>
<dbReference type="RefSeq" id="WP_000257282.1">
    <property type="nucleotide sequence ID" value="NZ_CCMR01000003.1"/>
</dbReference>
<dbReference type="SMR" id="B4T2P5"/>
<dbReference type="GeneID" id="66758562"/>
<dbReference type="KEGG" id="see:SNSL254_A4695"/>
<dbReference type="HOGENOM" id="CLU_074944_0_0_6"/>
<dbReference type="UniPathway" id="UPA00345"/>
<dbReference type="Proteomes" id="UP000008824">
    <property type="component" value="Chromosome"/>
</dbReference>
<dbReference type="GO" id="GO:0005829">
    <property type="term" value="C:cytosol"/>
    <property type="evidence" value="ECO:0007669"/>
    <property type="project" value="UniProtKB-ARBA"/>
</dbReference>
<dbReference type="GO" id="GO:0003746">
    <property type="term" value="F:translation elongation factor activity"/>
    <property type="evidence" value="ECO:0007669"/>
    <property type="project" value="UniProtKB-UniRule"/>
</dbReference>
<dbReference type="GO" id="GO:0043043">
    <property type="term" value="P:peptide biosynthetic process"/>
    <property type="evidence" value="ECO:0007669"/>
    <property type="project" value="InterPro"/>
</dbReference>
<dbReference type="CDD" id="cd04470">
    <property type="entry name" value="S1_EF-P_repeat_1"/>
    <property type="match status" value="1"/>
</dbReference>
<dbReference type="CDD" id="cd05794">
    <property type="entry name" value="S1_EF-P_repeat_2"/>
    <property type="match status" value="1"/>
</dbReference>
<dbReference type="FunFam" id="2.30.30.30:FF:000003">
    <property type="entry name" value="Elongation factor P"/>
    <property type="match status" value="1"/>
</dbReference>
<dbReference type="FunFam" id="2.40.50.140:FF:000004">
    <property type="entry name" value="Elongation factor P"/>
    <property type="match status" value="1"/>
</dbReference>
<dbReference type="FunFam" id="2.40.50.140:FF:000009">
    <property type="entry name" value="Elongation factor P"/>
    <property type="match status" value="1"/>
</dbReference>
<dbReference type="Gene3D" id="2.30.30.30">
    <property type="match status" value="1"/>
</dbReference>
<dbReference type="Gene3D" id="2.40.50.140">
    <property type="entry name" value="Nucleic acid-binding proteins"/>
    <property type="match status" value="2"/>
</dbReference>
<dbReference type="HAMAP" id="MF_00141">
    <property type="entry name" value="EF_P"/>
    <property type="match status" value="1"/>
</dbReference>
<dbReference type="InterPro" id="IPR015365">
    <property type="entry name" value="Elong-fact-P_C"/>
</dbReference>
<dbReference type="InterPro" id="IPR012340">
    <property type="entry name" value="NA-bd_OB-fold"/>
</dbReference>
<dbReference type="InterPro" id="IPR014722">
    <property type="entry name" value="Rib_uL2_dom2"/>
</dbReference>
<dbReference type="InterPro" id="IPR020599">
    <property type="entry name" value="Transl_elong_fac_P/YeiP"/>
</dbReference>
<dbReference type="InterPro" id="IPR013185">
    <property type="entry name" value="Transl_elong_KOW-like"/>
</dbReference>
<dbReference type="InterPro" id="IPR001059">
    <property type="entry name" value="Transl_elong_P/YeiP_cen"/>
</dbReference>
<dbReference type="InterPro" id="IPR013852">
    <property type="entry name" value="Transl_elong_P/YeiP_CS"/>
</dbReference>
<dbReference type="InterPro" id="IPR011768">
    <property type="entry name" value="Transl_elongation_fac_P"/>
</dbReference>
<dbReference type="InterPro" id="IPR008991">
    <property type="entry name" value="Translation_prot_SH3-like_sf"/>
</dbReference>
<dbReference type="NCBIfam" id="TIGR00038">
    <property type="entry name" value="efp"/>
    <property type="match status" value="1"/>
</dbReference>
<dbReference type="NCBIfam" id="NF001810">
    <property type="entry name" value="PRK00529.1"/>
    <property type="match status" value="1"/>
</dbReference>
<dbReference type="PANTHER" id="PTHR30053">
    <property type="entry name" value="ELONGATION FACTOR P"/>
    <property type="match status" value="1"/>
</dbReference>
<dbReference type="PANTHER" id="PTHR30053:SF12">
    <property type="entry name" value="ELONGATION FACTOR P (EF-P) FAMILY PROTEIN"/>
    <property type="match status" value="1"/>
</dbReference>
<dbReference type="Pfam" id="PF01132">
    <property type="entry name" value="EFP"/>
    <property type="match status" value="1"/>
</dbReference>
<dbReference type="Pfam" id="PF08207">
    <property type="entry name" value="EFP_N"/>
    <property type="match status" value="1"/>
</dbReference>
<dbReference type="Pfam" id="PF09285">
    <property type="entry name" value="Elong-fact-P_C"/>
    <property type="match status" value="1"/>
</dbReference>
<dbReference type="PIRSF" id="PIRSF005901">
    <property type="entry name" value="EF-P"/>
    <property type="match status" value="1"/>
</dbReference>
<dbReference type="SMART" id="SM01185">
    <property type="entry name" value="EFP"/>
    <property type="match status" value="1"/>
</dbReference>
<dbReference type="SMART" id="SM00841">
    <property type="entry name" value="Elong-fact-P_C"/>
    <property type="match status" value="1"/>
</dbReference>
<dbReference type="SUPFAM" id="SSF50249">
    <property type="entry name" value="Nucleic acid-binding proteins"/>
    <property type="match status" value="2"/>
</dbReference>
<dbReference type="SUPFAM" id="SSF50104">
    <property type="entry name" value="Translation proteins SH3-like domain"/>
    <property type="match status" value="1"/>
</dbReference>
<dbReference type="PROSITE" id="PS01275">
    <property type="entry name" value="EFP"/>
    <property type="match status" value="1"/>
</dbReference>
<accession>B4T2P5</accession>
<feature type="chain" id="PRO_1000096202" description="Elongation factor P">
    <location>
        <begin position="1"/>
        <end position="188"/>
    </location>
</feature>
<feature type="modified residue" description="N6-(3,6-diaminohexanoyl)-5-hydroxylysine" evidence="1">
    <location>
        <position position="34"/>
    </location>
</feature>
<comment type="function">
    <text evidence="1">Involved in peptide bond synthesis. Alleviates ribosome stalling that occurs when 3 or more consecutive Pro residues or the sequence PPG is present in a protein, possibly by augmenting the peptidyl transferase activity of the ribosome. Modification of Lys-34 is required for alleviation.</text>
</comment>
<comment type="pathway">
    <text evidence="1">Protein biosynthesis; polypeptide chain elongation.</text>
</comment>
<comment type="subcellular location">
    <subcellularLocation>
        <location evidence="1">Cytoplasm</location>
    </subcellularLocation>
</comment>
<comment type="PTM">
    <text evidence="1">Is beta-lysylated on the epsilon-amino group of Lys-34 by the combined action of EpmA and EpmB, and then hydroxylated on the C5 position of the same residue by EpmC. Lysylation is critical for the stimulatory effect of EF-P on peptide-bond formation. The lysylation moiety would extend toward the peptidyltransferase center and stabilize the terminal 3-CCA end of the tRNA. The hydroxylation of the C5 position on Lys-34 would allow additional potential stabilizing hydrogen-bond interactions with the P-tRNA.</text>
</comment>
<comment type="similarity">
    <text evidence="1">Belongs to the elongation factor P family.</text>
</comment>
<proteinExistence type="inferred from homology"/>
<name>EFP_SALNS</name>
<evidence type="ECO:0000255" key="1">
    <source>
        <dbReference type="HAMAP-Rule" id="MF_00141"/>
    </source>
</evidence>
<sequence length="188" mass="20623">MATYYSNDFRSGLKIMLDGEPYAVESSEFVKPGKGQAFARVKLRRLLTGTRVEKTFKSTDSAEGADVVDMNLTYLYNDGEFWHFMNNETFEQLSADAKAIGDNAKWLLDQAECIVTLWNGQPISVTPPNFVELEIVDTDPGLKGDTAGTGGKPATLSTGAVVKVPLFVQIGEVIKVDTRSGEYVSRVK</sequence>
<organism>
    <name type="scientific">Salmonella newport (strain SL254)</name>
    <dbReference type="NCBI Taxonomy" id="423368"/>
    <lineage>
        <taxon>Bacteria</taxon>
        <taxon>Pseudomonadati</taxon>
        <taxon>Pseudomonadota</taxon>
        <taxon>Gammaproteobacteria</taxon>
        <taxon>Enterobacterales</taxon>
        <taxon>Enterobacteriaceae</taxon>
        <taxon>Salmonella</taxon>
    </lineage>
</organism>
<reference key="1">
    <citation type="journal article" date="2011" name="J. Bacteriol.">
        <title>Comparative genomics of 28 Salmonella enterica isolates: evidence for CRISPR-mediated adaptive sublineage evolution.</title>
        <authorList>
            <person name="Fricke W.F."/>
            <person name="Mammel M.K."/>
            <person name="McDermott P.F."/>
            <person name="Tartera C."/>
            <person name="White D.G."/>
            <person name="Leclerc J.E."/>
            <person name="Ravel J."/>
            <person name="Cebula T.A."/>
        </authorList>
    </citation>
    <scope>NUCLEOTIDE SEQUENCE [LARGE SCALE GENOMIC DNA]</scope>
    <source>
        <strain>SL254</strain>
    </source>
</reference>
<keyword id="KW-0963">Cytoplasm</keyword>
<keyword id="KW-0251">Elongation factor</keyword>
<keyword id="KW-0379">Hydroxylation</keyword>
<keyword id="KW-0648">Protein biosynthesis</keyword>